<protein>
    <recommendedName>
        <fullName evidence="1">Large ribosomal subunit protein uL6</fullName>
    </recommendedName>
    <alternativeName>
        <fullName evidence="2">50S ribosomal protein L6</fullName>
    </alternativeName>
</protein>
<evidence type="ECO:0000255" key="1">
    <source>
        <dbReference type="HAMAP-Rule" id="MF_01365"/>
    </source>
</evidence>
<evidence type="ECO:0000305" key="2"/>
<gene>
    <name evidence="1" type="primary">rplF</name>
    <name type="ordered locus">Bd2962</name>
</gene>
<sequence length="180" mass="19212">MSRIGKAPVIFDNTVQVSVSPANEVVVKGAKSSLTIGMKPNVSAKIDGNKVVLTPNDDTKESRAMHGLYRALIQNAVTGVTKGFSRGLELQGVGYRANVAGKKLELSLGFSHPVIFDIPEGIEIKVEKQTSLTVNGPSKELVGQVAAKIRSFRPPEPYLGKGVRYAGEQIRRKAGKSAGK</sequence>
<organism>
    <name type="scientific">Bdellovibrio bacteriovorus (strain ATCC 15356 / DSM 50701 / NCIMB 9529 / HD100)</name>
    <dbReference type="NCBI Taxonomy" id="264462"/>
    <lineage>
        <taxon>Bacteria</taxon>
        <taxon>Pseudomonadati</taxon>
        <taxon>Bdellovibrionota</taxon>
        <taxon>Bdellovibrionia</taxon>
        <taxon>Bdellovibrionales</taxon>
        <taxon>Pseudobdellovibrionaceae</taxon>
        <taxon>Bdellovibrio</taxon>
    </lineage>
</organism>
<reference key="1">
    <citation type="journal article" date="2004" name="Science">
        <title>A predator unmasked: life cycle of Bdellovibrio bacteriovorus from a genomic perspective.</title>
        <authorList>
            <person name="Rendulic S."/>
            <person name="Jagtap P."/>
            <person name="Rosinus A."/>
            <person name="Eppinger M."/>
            <person name="Baar C."/>
            <person name="Lanz C."/>
            <person name="Keller H."/>
            <person name="Lambert C."/>
            <person name="Evans K.J."/>
            <person name="Goesmann A."/>
            <person name="Meyer F."/>
            <person name="Sockett R.E."/>
            <person name="Schuster S.C."/>
        </authorList>
    </citation>
    <scope>NUCLEOTIDE SEQUENCE [LARGE SCALE GENOMIC DNA]</scope>
    <source>
        <strain>ATCC 15356 / DSM 50701 / NCIMB 9529 / HD100</strain>
    </source>
</reference>
<feature type="chain" id="PRO_0000265218" description="Large ribosomal subunit protein uL6">
    <location>
        <begin position="1"/>
        <end position="180"/>
    </location>
</feature>
<accession>Q6MJ27</accession>
<name>RL6_BDEBA</name>
<proteinExistence type="inferred from homology"/>
<dbReference type="EMBL" id="BX842654">
    <property type="protein sequence ID" value="CAE80735.1"/>
    <property type="molecule type" value="Genomic_DNA"/>
</dbReference>
<dbReference type="RefSeq" id="WP_011165339.1">
    <property type="nucleotide sequence ID" value="NC_005363.1"/>
</dbReference>
<dbReference type="SMR" id="Q6MJ27"/>
<dbReference type="STRING" id="264462.Bd2962"/>
<dbReference type="GeneID" id="93013825"/>
<dbReference type="KEGG" id="bba:Bd2962"/>
<dbReference type="eggNOG" id="COG0097">
    <property type="taxonomic scope" value="Bacteria"/>
</dbReference>
<dbReference type="HOGENOM" id="CLU_065464_1_2_7"/>
<dbReference type="Proteomes" id="UP000008080">
    <property type="component" value="Chromosome"/>
</dbReference>
<dbReference type="GO" id="GO:0022625">
    <property type="term" value="C:cytosolic large ribosomal subunit"/>
    <property type="evidence" value="ECO:0007669"/>
    <property type="project" value="TreeGrafter"/>
</dbReference>
<dbReference type="GO" id="GO:0019843">
    <property type="term" value="F:rRNA binding"/>
    <property type="evidence" value="ECO:0007669"/>
    <property type="project" value="UniProtKB-UniRule"/>
</dbReference>
<dbReference type="GO" id="GO:0003735">
    <property type="term" value="F:structural constituent of ribosome"/>
    <property type="evidence" value="ECO:0007669"/>
    <property type="project" value="InterPro"/>
</dbReference>
<dbReference type="GO" id="GO:0002181">
    <property type="term" value="P:cytoplasmic translation"/>
    <property type="evidence" value="ECO:0007669"/>
    <property type="project" value="TreeGrafter"/>
</dbReference>
<dbReference type="FunFam" id="3.90.930.12:FF:000001">
    <property type="entry name" value="50S ribosomal protein L6"/>
    <property type="match status" value="1"/>
</dbReference>
<dbReference type="Gene3D" id="3.90.930.12">
    <property type="entry name" value="Ribosomal protein L6, alpha-beta domain"/>
    <property type="match status" value="2"/>
</dbReference>
<dbReference type="HAMAP" id="MF_01365_B">
    <property type="entry name" value="Ribosomal_uL6_B"/>
    <property type="match status" value="1"/>
</dbReference>
<dbReference type="InterPro" id="IPR000702">
    <property type="entry name" value="Ribosomal_uL6-like"/>
</dbReference>
<dbReference type="InterPro" id="IPR036789">
    <property type="entry name" value="Ribosomal_uL6-like_a/b-dom_sf"/>
</dbReference>
<dbReference type="InterPro" id="IPR020040">
    <property type="entry name" value="Ribosomal_uL6_a/b-dom"/>
</dbReference>
<dbReference type="InterPro" id="IPR019906">
    <property type="entry name" value="Ribosomal_uL6_bac-type"/>
</dbReference>
<dbReference type="NCBIfam" id="TIGR03654">
    <property type="entry name" value="L6_bact"/>
    <property type="match status" value="1"/>
</dbReference>
<dbReference type="PANTHER" id="PTHR11655">
    <property type="entry name" value="60S/50S RIBOSOMAL PROTEIN L6/L9"/>
    <property type="match status" value="1"/>
</dbReference>
<dbReference type="PANTHER" id="PTHR11655:SF14">
    <property type="entry name" value="LARGE RIBOSOMAL SUBUNIT PROTEIN UL6M"/>
    <property type="match status" value="1"/>
</dbReference>
<dbReference type="Pfam" id="PF00347">
    <property type="entry name" value="Ribosomal_L6"/>
    <property type="match status" value="2"/>
</dbReference>
<dbReference type="PIRSF" id="PIRSF002162">
    <property type="entry name" value="Ribosomal_L6"/>
    <property type="match status" value="1"/>
</dbReference>
<dbReference type="PRINTS" id="PR00059">
    <property type="entry name" value="RIBOSOMALL6"/>
</dbReference>
<dbReference type="SUPFAM" id="SSF56053">
    <property type="entry name" value="Ribosomal protein L6"/>
    <property type="match status" value="2"/>
</dbReference>
<keyword id="KW-1185">Reference proteome</keyword>
<keyword id="KW-0687">Ribonucleoprotein</keyword>
<keyword id="KW-0689">Ribosomal protein</keyword>
<keyword id="KW-0694">RNA-binding</keyword>
<keyword id="KW-0699">rRNA-binding</keyword>
<comment type="function">
    <text evidence="1">This protein binds to the 23S rRNA, and is important in its secondary structure. It is located near the subunit interface in the base of the L7/L12 stalk, and near the tRNA binding site of the peptidyltransferase center.</text>
</comment>
<comment type="subunit">
    <text evidence="1">Part of the 50S ribosomal subunit.</text>
</comment>
<comment type="similarity">
    <text evidence="1">Belongs to the universal ribosomal protein uL6 family.</text>
</comment>